<protein>
    <recommendedName>
        <fullName>Ubiquitin carboxyl-terminal hydrolase 47</fullName>
        <ecNumber>3.4.19.12</ecNumber>
    </recommendedName>
    <alternativeName>
        <fullName>Deubiquitinating enzyme 47</fullName>
    </alternativeName>
    <alternativeName>
        <fullName>Ubiquitin thioesterase 47</fullName>
    </alternativeName>
    <alternativeName>
        <fullName>Ubiquitin-specific-processing protease 47</fullName>
    </alternativeName>
</protein>
<comment type="function">
    <text evidence="1">Ubiquitin-specific protease that specifically deubiquitinates monoubiquitinated DNA polymerase beta (polb), stabilizing polb thereby playing a role in base-excision repair (BER).</text>
</comment>
<comment type="catalytic activity">
    <reaction>
        <text>Thiol-dependent hydrolysis of ester, thioester, amide, peptide and isopeptide bonds formed by the C-terminal Gly of ubiquitin (a 76-residue protein attached to proteins as an intracellular targeting signal).</text>
        <dbReference type="EC" id="3.4.19.12"/>
    </reaction>
</comment>
<comment type="subcellular location">
    <subcellularLocation>
        <location evidence="1">Cytoplasm</location>
    </subcellularLocation>
</comment>
<comment type="similarity">
    <text evidence="5">Belongs to the peptidase C19 family. USP47 subfamily.</text>
</comment>
<organism>
    <name type="scientific">Xenopus laevis</name>
    <name type="common">African clawed frog</name>
    <dbReference type="NCBI Taxonomy" id="8355"/>
    <lineage>
        <taxon>Eukaryota</taxon>
        <taxon>Metazoa</taxon>
        <taxon>Chordata</taxon>
        <taxon>Craniata</taxon>
        <taxon>Vertebrata</taxon>
        <taxon>Euteleostomi</taxon>
        <taxon>Amphibia</taxon>
        <taxon>Batrachia</taxon>
        <taxon>Anura</taxon>
        <taxon>Pipoidea</taxon>
        <taxon>Pipidae</taxon>
        <taxon>Xenopodinae</taxon>
        <taxon>Xenopus</taxon>
        <taxon>Xenopus</taxon>
    </lineage>
</organism>
<keyword id="KW-0963">Cytoplasm</keyword>
<keyword id="KW-0227">DNA damage</keyword>
<keyword id="KW-0234">DNA repair</keyword>
<keyword id="KW-0378">Hydrolase</keyword>
<keyword id="KW-0645">Protease</keyword>
<keyword id="KW-1185">Reference proteome</keyword>
<keyword id="KW-0788">Thiol protease</keyword>
<keyword id="KW-0833">Ubl conjugation pathway</keyword>
<feature type="chain" id="PRO_0000408358" description="Ubiquitin carboxyl-terminal hydrolase 47">
    <location>
        <begin position="1"/>
        <end position="1350"/>
    </location>
</feature>
<feature type="domain" description="USP">
    <location>
        <begin position="173"/>
        <end position="548"/>
    </location>
</feature>
<feature type="region of interest" description="Disordered" evidence="4">
    <location>
        <begin position="111"/>
        <end position="138"/>
    </location>
</feature>
<feature type="region of interest" description="Disordered" evidence="4">
    <location>
        <begin position="409"/>
        <end position="437"/>
    </location>
</feature>
<feature type="region of interest" description="Disordered" evidence="4">
    <location>
        <begin position="815"/>
        <end position="836"/>
    </location>
</feature>
<feature type="region of interest" description="Disordered" evidence="4">
    <location>
        <begin position="859"/>
        <end position="1000"/>
    </location>
</feature>
<feature type="compositionally biased region" description="Polar residues" evidence="4">
    <location>
        <begin position="115"/>
        <end position="132"/>
    </location>
</feature>
<feature type="compositionally biased region" description="Polar residues" evidence="4">
    <location>
        <begin position="415"/>
        <end position="437"/>
    </location>
</feature>
<feature type="compositionally biased region" description="Polar residues" evidence="4">
    <location>
        <begin position="859"/>
        <end position="877"/>
    </location>
</feature>
<feature type="compositionally biased region" description="Basic and acidic residues" evidence="4">
    <location>
        <begin position="916"/>
        <end position="926"/>
    </location>
</feature>
<feature type="compositionally biased region" description="Low complexity" evidence="4">
    <location>
        <begin position="929"/>
        <end position="945"/>
    </location>
</feature>
<feature type="compositionally biased region" description="Basic and acidic residues" evidence="4">
    <location>
        <begin position="973"/>
        <end position="982"/>
    </location>
</feature>
<feature type="compositionally biased region" description="Acidic residues" evidence="4">
    <location>
        <begin position="983"/>
        <end position="996"/>
    </location>
</feature>
<feature type="active site" description="Nucleophile" evidence="2 3">
    <location>
        <position position="182"/>
    </location>
</feature>
<feature type="active site" description="Proton acceptor" evidence="2 3">
    <location>
        <position position="487"/>
    </location>
</feature>
<reference key="1">
    <citation type="submission" date="2004-11" db="EMBL/GenBank/DDBJ databases">
        <authorList>
            <consortium name="NIH - Xenopus Gene Collection (XGC) project"/>
        </authorList>
    </citation>
    <scope>NUCLEOTIDE SEQUENCE [LARGE SCALE MRNA]</scope>
    <source>
        <tissue>Embryo</tissue>
    </source>
</reference>
<sequence length="1350" mass="153261">MRPGEESQLVPKEIENAADEPRVLCIVQDTTNCKSVNERITLNLPASTSVKQLYEDVSNKAGYVSSTFSLMWGNGASNTDMAALDPTPDRTLQEAGFEAGKKNFLHLTDKDGEQPQLTSDESGTADSSGLDDSSQEKFIGPLPREESVAGTSNYVSQNYSYSSLLSKSDTGYVGLVNQAMTCYLNSLLQTLFMTPEFRNALYKWEFEESEEDPVSSIPYQLQRLFVLLQTSKKRAIETTDVTRSFGWDSSEAWQQHDVQELCRVMFDALEQKWKQTEQADLINQLYQGKLKDYVKCLECGYESWRIDTFLDIPLVIRPYGSNTAFGSMEEALHAFIQPETLDGPNQYFCERCKRKCDARKGLKFLHFPYLLTLQLKRFDFDYTSMHRIKLNDRMTFPDELDMSPFIDMEDEKSPQTDSCTDSGAENEGSCHSDQMSNDFSTDDAVDEGICLETNSNIEKLNKSVAEKNSLYELFSVMVHSGSAAGGHYYACIKSFADGQWYSFNDQHVSRITQEDIKKTYGGATGNRGYYSSAFASSTNAYMLMYRLKNPARNAQFLEASEFPEHIKLLVQKEQEQEEQEKRQREIERNTCKLKLFCMHPVKQIMMESKLEVHKDKTMKEAVEIANKLMDLEGVIPLDCCRLVKYDEFHDYLERSYEDEEDRTMGYLLGGVKSSYMFDLLLETKRPDQVFQSYKPGEVMVKVYVVDLKTETVASPVSVRAYLSQTIIEFKQLISKSVDLPPDSMRVILERCYNDLRLLNVANKTLKAEGFFRSNKVFVESSDSLDHQLVFTDSHLWKLLDRHANTIKLYVSLPEHPRPTARSVGPKGGGDMNPQEDYCSRAKSVDAILEESTEKLKSLSLQQHQDGGNGDSSKSTEGSDFENIDSPLNEVDSSGSADNRELENRILPADPENNFQPEERSDSDVNNDRSTSSVDSDILSSSHSSDTLCNADGTPIPLANGLDSHSITSSRRSKANDGKKETWDTAEEDSGTDSEYDESGKSRGEAQYMYFKAEPHAGEGCLAEGSKCLLVNVDKRITLAAFKQQLESFVGVPSSQFKVFRVYASNQEFESVRLNETLSSFSDDNKITIRLGRALKKGEYRVKIFQLLVNEPEPCKFVLDAVFSKGMTVRQSKEELLPLLREQCGLDLSIDRFRLRKKTWKNPGTVFLDSHVYENESISSCWEVLLEALDETEKMKSMSQLSLFTKRWRPSELKLDPFKEVVLESNSVEELRDKICEISAIPLENLEFAKGRGTFPCDISVLEIHQDLDWNPKVSTLNAWPLYISDDGAVIFYRDKTEEVMELTDEQRNELVKKESSRLQKTGHRVTYSPRKEKALKIYLDGPTNKDSAQD</sequence>
<proteinExistence type="evidence at transcript level"/>
<gene>
    <name type="primary">usp47</name>
</gene>
<name>UBP47_XENLA</name>
<evidence type="ECO:0000250" key="1"/>
<evidence type="ECO:0000255" key="2">
    <source>
        <dbReference type="PROSITE-ProRule" id="PRU10092"/>
    </source>
</evidence>
<evidence type="ECO:0000255" key="3">
    <source>
        <dbReference type="PROSITE-ProRule" id="PRU10093"/>
    </source>
</evidence>
<evidence type="ECO:0000256" key="4">
    <source>
        <dbReference type="SAM" id="MobiDB-lite"/>
    </source>
</evidence>
<evidence type="ECO:0000305" key="5"/>
<accession>Q5U252</accession>
<dbReference type="EC" id="3.4.19.12"/>
<dbReference type="EMBL" id="BC086278">
    <property type="protein sequence ID" value="AAH86278.1"/>
    <property type="molecule type" value="mRNA"/>
</dbReference>
<dbReference type="RefSeq" id="NP_001088634.1">
    <property type="nucleotide sequence ID" value="NM_001095165.1"/>
</dbReference>
<dbReference type="SMR" id="Q5U252"/>
<dbReference type="BioGRID" id="105766">
    <property type="interactions" value="1"/>
</dbReference>
<dbReference type="IntAct" id="Q5U252">
    <property type="interactions" value="1"/>
</dbReference>
<dbReference type="MEROPS" id="C19.055"/>
<dbReference type="GeneID" id="495686"/>
<dbReference type="KEGG" id="xla:495686"/>
<dbReference type="AGR" id="Xenbase:XB-GENE-5760104"/>
<dbReference type="CTD" id="495686"/>
<dbReference type="Xenbase" id="XB-GENE-5760104">
    <property type="gene designation" value="usp47.L"/>
</dbReference>
<dbReference type="OrthoDB" id="289038at2759"/>
<dbReference type="Proteomes" id="UP000186698">
    <property type="component" value="Chromosome 4L"/>
</dbReference>
<dbReference type="Bgee" id="495686">
    <property type="expression patterns" value="Expressed in testis and 19 other cell types or tissues"/>
</dbReference>
<dbReference type="GO" id="GO:0005737">
    <property type="term" value="C:cytoplasm"/>
    <property type="evidence" value="ECO:0000250"/>
    <property type="project" value="UniProtKB"/>
</dbReference>
<dbReference type="GO" id="GO:0005829">
    <property type="term" value="C:cytosol"/>
    <property type="evidence" value="ECO:0000318"/>
    <property type="project" value="GO_Central"/>
</dbReference>
<dbReference type="GO" id="GO:0005634">
    <property type="term" value="C:nucleus"/>
    <property type="evidence" value="ECO:0000318"/>
    <property type="project" value="GO_Central"/>
</dbReference>
<dbReference type="GO" id="GO:0004843">
    <property type="term" value="F:cysteine-type deubiquitinase activity"/>
    <property type="evidence" value="ECO:0000250"/>
    <property type="project" value="UniProtKB"/>
</dbReference>
<dbReference type="GO" id="GO:0006284">
    <property type="term" value="P:base-excision repair"/>
    <property type="evidence" value="ECO:0000250"/>
    <property type="project" value="UniProtKB"/>
</dbReference>
<dbReference type="GO" id="GO:0006974">
    <property type="term" value="P:DNA damage response"/>
    <property type="evidence" value="ECO:0000250"/>
    <property type="project" value="UniProtKB"/>
</dbReference>
<dbReference type="GO" id="GO:0035520">
    <property type="term" value="P:monoubiquitinated protein deubiquitination"/>
    <property type="evidence" value="ECO:0000250"/>
    <property type="project" value="UniProtKB"/>
</dbReference>
<dbReference type="GO" id="GO:0006508">
    <property type="term" value="P:proteolysis"/>
    <property type="evidence" value="ECO:0007669"/>
    <property type="project" value="UniProtKB-KW"/>
</dbReference>
<dbReference type="GO" id="GO:0031647">
    <property type="term" value="P:regulation of protein stability"/>
    <property type="evidence" value="ECO:0000318"/>
    <property type="project" value="GO_Central"/>
</dbReference>
<dbReference type="CDD" id="cd02659">
    <property type="entry name" value="peptidase_C19C"/>
    <property type="match status" value="1"/>
</dbReference>
<dbReference type="Gene3D" id="3.90.70.10">
    <property type="entry name" value="Cysteine proteinases"/>
    <property type="match status" value="1"/>
</dbReference>
<dbReference type="InterPro" id="IPR038765">
    <property type="entry name" value="Papain-like_cys_pep_sf"/>
</dbReference>
<dbReference type="InterPro" id="IPR050164">
    <property type="entry name" value="Peptidase_C19"/>
</dbReference>
<dbReference type="InterPro" id="IPR001394">
    <property type="entry name" value="Peptidase_C19_UCH"/>
</dbReference>
<dbReference type="InterPro" id="IPR029071">
    <property type="entry name" value="Ubiquitin-like_domsf"/>
</dbReference>
<dbReference type="InterPro" id="IPR045578">
    <property type="entry name" value="USP47_C"/>
</dbReference>
<dbReference type="InterPro" id="IPR018200">
    <property type="entry name" value="USP_CS"/>
</dbReference>
<dbReference type="InterPro" id="IPR028889">
    <property type="entry name" value="USP_dom"/>
</dbReference>
<dbReference type="PANTHER" id="PTHR24006">
    <property type="entry name" value="UBIQUITIN CARBOXYL-TERMINAL HYDROLASE"/>
    <property type="match status" value="1"/>
</dbReference>
<dbReference type="PANTHER" id="PTHR24006:SF702">
    <property type="entry name" value="UBIQUITIN CARBOXYL-TERMINAL HYDROLASE 47"/>
    <property type="match status" value="1"/>
</dbReference>
<dbReference type="Pfam" id="PF00443">
    <property type="entry name" value="UCH"/>
    <property type="match status" value="1"/>
</dbReference>
<dbReference type="Pfam" id="PF19718">
    <property type="entry name" value="USP47_C"/>
    <property type="match status" value="1"/>
</dbReference>
<dbReference type="SUPFAM" id="SSF54001">
    <property type="entry name" value="Cysteine proteinases"/>
    <property type="match status" value="1"/>
</dbReference>
<dbReference type="SUPFAM" id="SSF54236">
    <property type="entry name" value="Ubiquitin-like"/>
    <property type="match status" value="1"/>
</dbReference>
<dbReference type="PROSITE" id="PS00972">
    <property type="entry name" value="USP_1"/>
    <property type="match status" value="1"/>
</dbReference>
<dbReference type="PROSITE" id="PS00973">
    <property type="entry name" value="USP_2"/>
    <property type="match status" value="1"/>
</dbReference>
<dbReference type="PROSITE" id="PS50235">
    <property type="entry name" value="USP_3"/>
    <property type="match status" value="1"/>
</dbReference>